<accession>Q6FIK6</accession>
<comment type="function">
    <text evidence="1">Component of the ceramide synthase complex required for synthesis of ceramides.</text>
</comment>
<comment type="subunit">
    <text evidence="1">Component of the ceramide synthase complex.</text>
</comment>
<comment type="subcellular location">
    <subcellularLocation>
        <location evidence="1">Endoplasmic reticulum membrane</location>
        <topology evidence="1">Single-pass type II membrane protein</topology>
    </subcellularLocation>
</comment>
<comment type="similarity">
    <text evidence="3">Belongs to the LIP1 family.</text>
</comment>
<organism>
    <name type="scientific">Candida glabrata (strain ATCC 2001 / BCRC 20586 / JCM 3761 / NBRC 0622 / NRRL Y-65 / CBS 138)</name>
    <name type="common">Yeast</name>
    <name type="synonym">Nakaseomyces glabratus</name>
    <dbReference type="NCBI Taxonomy" id="284593"/>
    <lineage>
        <taxon>Eukaryota</taxon>
        <taxon>Fungi</taxon>
        <taxon>Dikarya</taxon>
        <taxon>Ascomycota</taxon>
        <taxon>Saccharomycotina</taxon>
        <taxon>Saccharomycetes</taxon>
        <taxon>Saccharomycetales</taxon>
        <taxon>Saccharomycetaceae</taxon>
        <taxon>Nakaseomyces</taxon>
    </lineage>
</organism>
<name>LIP1_CANGA</name>
<evidence type="ECO:0000250" key="1"/>
<evidence type="ECO:0000255" key="2"/>
<evidence type="ECO:0000305" key="3"/>
<feature type="chain" id="PRO_0000308779" description="Ceramide synthase subunit LIP1">
    <location>
        <begin position="1"/>
        <end position="144"/>
    </location>
</feature>
<feature type="topological domain" description="Cytoplasmic" evidence="1">
    <location>
        <begin position="1"/>
        <end position="9"/>
    </location>
</feature>
<feature type="transmembrane region" description="Helical; Signal-anchor for type II membrane protein" evidence="2">
    <location>
        <begin position="10"/>
        <end position="32"/>
    </location>
</feature>
<feature type="topological domain" description="Lumenal" evidence="1">
    <location>
        <begin position="33"/>
        <end position="144"/>
    </location>
</feature>
<feature type="glycosylation site" description="N-linked (GlcNAc...) asparagine" evidence="2">
    <location>
        <position position="100"/>
    </location>
</feature>
<dbReference type="EMBL" id="CR380959">
    <property type="protein sequence ID" value="CAG62918.1"/>
    <property type="molecule type" value="Genomic_DNA"/>
</dbReference>
<dbReference type="RefSeq" id="XP_449938.1">
    <property type="nucleotide sequence ID" value="XM_449938.1"/>
</dbReference>
<dbReference type="SMR" id="Q6FIK6"/>
<dbReference type="FunCoup" id="Q6FIK6">
    <property type="interactions" value="27"/>
</dbReference>
<dbReference type="STRING" id="284593.Q6FIK6"/>
<dbReference type="GlyCosmos" id="Q6FIK6">
    <property type="glycosylation" value="1 site, No reported glycans"/>
</dbReference>
<dbReference type="EnsemblFungi" id="CAGL0M13673g-T">
    <property type="protein sequence ID" value="CAGL0M13673g-T-p1"/>
    <property type="gene ID" value="CAGL0M13673g"/>
</dbReference>
<dbReference type="KEGG" id="cgr:2891229"/>
<dbReference type="CGD" id="CAL0136939">
    <property type="gene designation" value="CAGL0M13673g"/>
</dbReference>
<dbReference type="VEuPathDB" id="FungiDB:B1J91_M13673g"/>
<dbReference type="VEuPathDB" id="FungiDB:CAGL0M13673g"/>
<dbReference type="eggNOG" id="ENOG502S1YW">
    <property type="taxonomic scope" value="Eukaryota"/>
</dbReference>
<dbReference type="HOGENOM" id="CLU_1759093_0_0_1"/>
<dbReference type="InParanoid" id="Q6FIK6"/>
<dbReference type="OMA" id="STRINYE"/>
<dbReference type="Proteomes" id="UP000002428">
    <property type="component" value="Chromosome M"/>
</dbReference>
<dbReference type="GO" id="GO:0061576">
    <property type="term" value="C:acyl-CoA ceramide synthase complex"/>
    <property type="evidence" value="ECO:0007669"/>
    <property type="project" value="EnsemblFungi"/>
</dbReference>
<dbReference type="GO" id="GO:0005789">
    <property type="term" value="C:endoplasmic reticulum membrane"/>
    <property type="evidence" value="ECO:0007669"/>
    <property type="project" value="UniProtKB-SubCell"/>
</dbReference>
<dbReference type="GO" id="GO:0050291">
    <property type="term" value="F:sphingosine N-acyltransferase activity"/>
    <property type="evidence" value="ECO:0007669"/>
    <property type="project" value="EnsemblFungi"/>
</dbReference>
<dbReference type="GO" id="GO:0046513">
    <property type="term" value="P:ceramide biosynthetic process"/>
    <property type="evidence" value="ECO:0007669"/>
    <property type="project" value="EnsemblFungi"/>
</dbReference>
<dbReference type="CDD" id="cd24143">
    <property type="entry name" value="LIP1-like"/>
    <property type="match status" value="1"/>
</dbReference>
<sequence>MSTPYTPAPQIFNLFKVLAVSLALIAAVEYFKYGTRINYEWFHCTPVMERVGGPDSSVLKIWARGGPSCDKRGEYKTILKRISRDYEPNDEHLSFCIKENMSVDPVHYPIHEDKGEPGYIAYVGYDSDKRTVDELCEGTTVFHF</sequence>
<protein>
    <recommendedName>
        <fullName>Ceramide synthase subunit LIP1</fullName>
    </recommendedName>
</protein>
<keyword id="KW-0256">Endoplasmic reticulum</keyword>
<keyword id="KW-0325">Glycoprotein</keyword>
<keyword id="KW-0444">Lipid biosynthesis</keyword>
<keyword id="KW-0443">Lipid metabolism</keyword>
<keyword id="KW-0472">Membrane</keyword>
<keyword id="KW-1185">Reference proteome</keyword>
<keyword id="KW-0735">Signal-anchor</keyword>
<keyword id="KW-0812">Transmembrane</keyword>
<keyword id="KW-1133">Transmembrane helix</keyword>
<reference key="1">
    <citation type="journal article" date="2004" name="Nature">
        <title>Genome evolution in yeasts.</title>
        <authorList>
            <person name="Dujon B."/>
            <person name="Sherman D."/>
            <person name="Fischer G."/>
            <person name="Durrens P."/>
            <person name="Casaregola S."/>
            <person name="Lafontaine I."/>
            <person name="de Montigny J."/>
            <person name="Marck C."/>
            <person name="Neuveglise C."/>
            <person name="Talla E."/>
            <person name="Goffard N."/>
            <person name="Frangeul L."/>
            <person name="Aigle M."/>
            <person name="Anthouard V."/>
            <person name="Babour A."/>
            <person name="Barbe V."/>
            <person name="Barnay S."/>
            <person name="Blanchin S."/>
            <person name="Beckerich J.-M."/>
            <person name="Beyne E."/>
            <person name="Bleykasten C."/>
            <person name="Boisrame A."/>
            <person name="Boyer J."/>
            <person name="Cattolico L."/>
            <person name="Confanioleri F."/>
            <person name="de Daruvar A."/>
            <person name="Despons L."/>
            <person name="Fabre E."/>
            <person name="Fairhead C."/>
            <person name="Ferry-Dumazet H."/>
            <person name="Groppi A."/>
            <person name="Hantraye F."/>
            <person name="Hennequin C."/>
            <person name="Jauniaux N."/>
            <person name="Joyet P."/>
            <person name="Kachouri R."/>
            <person name="Kerrest A."/>
            <person name="Koszul R."/>
            <person name="Lemaire M."/>
            <person name="Lesur I."/>
            <person name="Ma L."/>
            <person name="Muller H."/>
            <person name="Nicaud J.-M."/>
            <person name="Nikolski M."/>
            <person name="Oztas S."/>
            <person name="Ozier-Kalogeropoulos O."/>
            <person name="Pellenz S."/>
            <person name="Potier S."/>
            <person name="Richard G.-F."/>
            <person name="Straub M.-L."/>
            <person name="Suleau A."/>
            <person name="Swennen D."/>
            <person name="Tekaia F."/>
            <person name="Wesolowski-Louvel M."/>
            <person name="Westhof E."/>
            <person name="Wirth B."/>
            <person name="Zeniou-Meyer M."/>
            <person name="Zivanovic Y."/>
            <person name="Bolotin-Fukuhara M."/>
            <person name="Thierry A."/>
            <person name="Bouchier C."/>
            <person name="Caudron B."/>
            <person name="Scarpelli C."/>
            <person name="Gaillardin C."/>
            <person name="Weissenbach J."/>
            <person name="Wincker P."/>
            <person name="Souciet J.-L."/>
        </authorList>
    </citation>
    <scope>NUCLEOTIDE SEQUENCE [LARGE SCALE GENOMIC DNA]</scope>
    <source>
        <strain>ATCC 2001 / BCRC 20586 / JCM 3761 / NBRC 0622 / NRRL Y-65 / CBS 138</strain>
    </source>
</reference>
<proteinExistence type="inferred from homology"/>
<gene>
    <name type="primary">LIP1</name>
    <name type="ordered locus">CAGL0M13673g</name>
</gene>